<reference key="1">
    <citation type="journal article" date="2008" name="J. Bacteriol.">
        <title>The genome sequence of the tomato-pathogenic actinomycete Clavibacter michiganensis subsp. michiganensis NCPPB382 reveals a large island involved in pathogenicity.</title>
        <authorList>
            <person name="Gartemann K.-H."/>
            <person name="Abt B."/>
            <person name="Bekel T."/>
            <person name="Burger A."/>
            <person name="Engemann J."/>
            <person name="Fluegel M."/>
            <person name="Gaigalat L."/>
            <person name="Goesmann A."/>
            <person name="Graefen I."/>
            <person name="Kalinowski J."/>
            <person name="Kaup O."/>
            <person name="Kirchner O."/>
            <person name="Krause L."/>
            <person name="Linke B."/>
            <person name="McHardy A."/>
            <person name="Meyer F."/>
            <person name="Pohle S."/>
            <person name="Rueckert C."/>
            <person name="Schneiker S."/>
            <person name="Zellermann E.-M."/>
            <person name="Puehler A."/>
            <person name="Eichenlaub R."/>
            <person name="Kaiser O."/>
            <person name="Bartels D."/>
        </authorList>
    </citation>
    <scope>NUCLEOTIDE SEQUENCE [LARGE SCALE GENOMIC DNA]</scope>
    <source>
        <strain>NCPPB 382</strain>
    </source>
</reference>
<organism>
    <name type="scientific">Clavibacter michiganensis subsp. michiganensis (strain NCPPB 382)</name>
    <dbReference type="NCBI Taxonomy" id="443906"/>
    <lineage>
        <taxon>Bacteria</taxon>
        <taxon>Bacillati</taxon>
        <taxon>Actinomycetota</taxon>
        <taxon>Actinomycetes</taxon>
        <taxon>Micrococcales</taxon>
        <taxon>Microbacteriaceae</taxon>
        <taxon>Clavibacter</taxon>
    </lineage>
</organism>
<proteinExistence type="inferred from homology"/>
<dbReference type="EC" id="5.2.1.8" evidence="1"/>
<dbReference type="EMBL" id="AM711867">
    <property type="protein sequence ID" value="CAN01508.1"/>
    <property type="molecule type" value="Genomic_DNA"/>
</dbReference>
<dbReference type="RefSeq" id="WP_012038149.1">
    <property type="nucleotide sequence ID" value="NC_009480.1"/>
</dbReference>
<dbReference type="SMR" id="A5CR04"/>
<dbReference type="KEGG" id="cmi:CMM_1463"/>
<dbReference type="eggNOG" id="COG0544">
    <property type="taxonomic scope" value="Bacteria"/>
</dbReference>
<dbReference type="HOGENOM" id="CLU_033058_3_0_11"/>
<dbReference type="OrthoDB" id="9767721at2"/>
<dbReference type="Proteomes" id="UP000001564">
    <property type="component" value="Chromosome"/>
</dbReference>
<dbReference type="GO" id="GO:0005737">
    <property type="term" value="C:cytoplasm"/>
    <property type="evidence" value="ECO:0007669"/>
    <property type="project" value="UniProtKB-SubCell"/>
</dbReference>
<dbReference type="GO" id="GO:0003755">
    <property type="term" value="F:peptidyl-prolyl cis-trans isomerase activity"/>
    <property type="evidence" value="ECO:0007669"/>
    <property type="project" value="UniProtKB-UniRule"/>
</dbReference>
<dbReference type="GO" id="GO:0044183">
    <property type="term" value="F:protein folding chaperone"/>
    <property type="evidence" value="ECO:0007669"/>
    <property type="project" value="TreeGrafter"/>
</dbReference>
<dbReference type="GO" id="GO:0043022">
    <property type="term" value="F:ribosome binding"/>
    <property type="evidence" value="ECO:0007669"/>
    <property type="project" value="TreeGrafter"/>
</dbReference>
<dbReference type="GO" id="GO:0051083">
    <property type="term" value="P:'de novo' cotranslational protein folding"/>
    <property type="evidence" value="ECO:0007669"/>
    <property type="project" value="TreeGrafter"/>
</dbReference>
<dbReference type="GO" id="GO:0051301">
    <property type="term" value="P:cell division"/>
    <property type="evidence" value="ECO:0007669"/>
    <property type="project" value="UniProtKB-KW"/>
</dbReference>
<dbReference type="GO" id="GO:0061077">
    <property type="term" value="P:chaperone-mediated protein folding"/>
    <property type="evidence" value="ECO:0007669"/>
    <property type="project" value="TreeGrafter"/>
</dbReference>
<dbReference type="GO" id="GO:0015031">
    <property type="term" value="P:protein transport"/>
    <property type="evidence" value="ECO:0007669"/>
    <property type="project" value="UniProtKB-UniRule"/>
</dbReference>
<dbReference type="GO" id="GO:0043335">
    <property type="term" value="P:protein unfolding"/>
    <property type="evidence" value="ECO:0007669"/>
    <property type="project" value="TreeGrafter"/>
</dbReference>
<dbReference type="Gene3D" id="3.10.50.40">
    <property type="match status" value="1"/>
</dbReference>
<dbReference type="Gene3D" id="3.30.70.1050">
    <property type="entry name" value="Trigger factor ribosome-binding domain"/>
    <property type="match status" value="1"/>
</dbReference>
<dbReference type="Gene3D" id="1.10.3120.10">
    <property type="entry name" value="Trigger factor, C-terminal domain"/>
    <property type="match status" value="1"/>
</dbReference>
<dbReference type="HAMAP" id="MF_00303">
    <property type="entry name" value="Trigger_factor_Tig"/>
    <property type="match status" value="1"/>
</dbReference>
<dbReference type="InterPro" id="IPR046357">
    <property type="entry name" value="PPIase_dom_sf"/>
</dbReference>
<dbReference type="InterPro" id="IPR001179">
    <property type="entry name" value="PPIase_FKBP_dom"/>
</dbReference>
<dbReference type="InterPro" id="IPR005215">
    <property type="entry name" value="Trig_fac"/>
</dbReference>
<dbReference type="InterPro" id="IPR008880">
    <property type="entry name" value="Trigger_fac_C"/>
</dbReference>
<dbReference type="InterPro" id="IPR037041">
    <property type="entry name" value="Trigger_fac_C_sf"/>
</dbReference>
<dbReference type="InterPro" id="IPR008881">
    <property type="entry name" value="Trigger_fac_ribosome-bd_bac"/>
</dbReference>
<dbReference type="InterPro" id="IPR036611">
    <property type="entry name" value="Trigger_fac_ribosome-bd_sf"/>
</dbReference>
<dbReference type="InterPro" id="IPR027304">
    <property type="entry name" value="Trigger_fact/SurA_dom_sf"/>
</dbReference>
<dbReference type="NCBIfam" id="TIGR00115">
    <property type="entry name" value="tig"/>
    <property type="match status" value="1"/>
</dbReference>
<dbReference type="PANTHER" id="PTHR30560">
    <property type="entry name" value="TRIGGER FACTOR CHAPERONE AND PEPTIDYL-PROLYL CIS/TRANS ISOMERASE"/>
    <property type="match status" value="1"/>
</dbReference>
<dbReference type="PANTHER" id="PTHR30560:SF3">
    <property type="entry name" value="TRIGGER FACTOR-LIKE PROTEIN TIG, CHLOROPLASTIC"/>
    <property type="match status" value="1"/>
</dbReference>
<dbReference type="Pfam" id="PF00254">
    <property type="entry name" value="FKBP_C"/>
    <property type="match status" value="1"/>
</dbReference>
<dbReference type="Pfam" id="PF05698">
    <property type="entry name" value="Trigger_C"/>
    <property type="match status" value="1"/>
</dbReference>
<dbReference type="Pfam" id="PF05697">
    <property type="entry name" value="Trigger_N"/>
    <property type="match status" value="1"/>
</dbReference>
<dbReference type="PIRSF" id="PIRSF003095">
    <property type="entry name" value="Trigger_factor"/>
    <property type="match status" value="1"/>
</dbReference>
<dbReference type="SUPFAM" id="SSF54534">
    <property type="entry name" value="FKBP-like"/>
    <property type="match status" value="1"/>
</dbReference>
<dbReference type="SUPFAM" id="SSF109998">
    <property type="entry name" value="Triger factor/SurA peptide-binding domain-like"/>
    <property type="match status" value="1"/>
</dbReference>
<dbReference type="SUPFAM" id="SSF102735">
    <property type="entry name" value="Trigger factor ribosome-binding domain"/>
    <property type="match status" value="1"/>
</dbReference>
<dbReference type="PROSITE" id="PS50059">
    <property type="entry name" value="FKBP_PPIASE"/>
    <property type="match status" value="1"/>
</dbReference>
<feature type="chain" id="PRO_1000022667" description="Trigger factor">
    <location>
        <begin position="1"/>
        <end position="484"/>
    </location>
</feature>
<feature type="domain" description="PPIase FKBP-type" evidence="1">
    <location>
        <begin position="165"/>
        <end position="244"/>
    </location>
</feature>
<feature type="region of interest" description="Disordered" evidence="2">
    <location>
        <begin position="429"/>
        <end position="484"/>
    </location>
</feature>
<feature type="compositionally biased region" description="Acidic residues" evidence="2">
    <location>
        <begin position="430"/>
        <end position="440"/>
    </location>
</feature>
<feature type="compositionally biased region" description="Basic and acidic residues" evidence="2">
    <location>
        <begin position="475"/>
        <end position="484"/>
    </location>
</feature>
<comment type="function">
    <text evidence="1">Involved in protein export. Acts as a chaperone by maintaining the newly synthesized protein in an open conformation. Functions as a peptidyl-prolyl cis-trans isomerase.</text>
</comment>
<comment type="catalytic activity">
    <reaction evidence="1">
        <text>[protein]-peptidylproline (omega=180) = [protein]-peptidylproline (omega=0)</text>
        <dbReference type="Rhea" id="RHEA:16237"/>
        <dbReference type="Rhea" id="RHEA-COMP:10747"/>
        <dbReference type="Rhea" id="RHEA-COMP:10748"/>
        <dbReference type="ChEBI" id="CHEBI:83833"/>
        <dbReference type="ChEBI" id="CHEBI:83834"/>
        <dbReference type="EC" id="5.2.1.8"/>
    </reaction>
</comment>
<comment type="subcellular location">
    <subcellularLocation>
        <location>Cytoplasm</location>
    </subcellularLocation>
    <text evidence="1">About half TF is bound to the ribosome near the polypeptide exit tunnel while the other half is free in the cytoplasm.</text>
</comment>
<comment type="domain">
    <text evidence="1">Consists of 3 domains; the N-terminus binds the ribosome, the middle domain has PPIase activity, while the C-terminus has intrinsic chaperone activity on its own.</text>
</comment>
<comment type="similarity">
    <text evidence="1">Belongs to the FKBP-type PPIase family. Tig subfamily.</text>
</comment>
<protein>
    <recommendedName>
        <fullName evidence="1">Trigger factor</fullName>
        <shortName evidence="1">TF</shortName>
        <ecNumber evidence="1">5.2.1.8</ecNumber>
    </recommendedName>
    <alternativeName>
        <fullName evidence="1">PPIase</fullName>
    </alternativeName>
</protein>
<name>TIG_CLAM3</name>
<gene>
    <name evidence="1" type="primary">tig</name>
    <name type="ordered locus">CMM_1463</name>
</gene>
<accession>A5CR04</accession>
<evidence type="ECO:0000255" key="1">
    <source>
        <dbReference type="HAMAP-Rule" id="MF_00303"/>
    </source>
</evidence>
<evidence type="ECO:0000256" key="2">
    <source>
        <dbReference type="SAM" id="MobiDB-lite"/>
    </source>
</evidence>
<sequence length="484" mass="52629">MKTTVEKLSPTRVKLAISATPEDLKPHIDHAYGHIAEQVAIPGFRKGKVPPPIIDQRVGREAVLEHAVNDGMDGFYQAAVKETDIRPLGRPEADVKEWPGKDLTGDLLLEIEVDVRPEFDLPAYEGLELTVDSVEVTDDEVATELDSLRSRFGTLITVDRPAKTGDFVQIDLTATIGGNAVDTASGISYELGSGDLIDGIDEALESLTAGESTTFESKLLGGDNEGETAEIAVTVQSVKERELPEADDDFAQIASEFDTIDELRADLKVQVGKSKVFGQVTQARDQIVDKLLEGVEIPVPEKLVEDEVQRHLENENRLEDDVHRAEVKESSEKAFRQQLLLDVIAEKEELKVSQDELTQYLIQGAQQYNMEPNEFVQVLQQNNQIPAMVGEVARNKALAVVLDKAKVVDADGKVVDVTEFTKPVVRDADAVSEEPADADAEAVVADAPAEEAAEAPAAEEAPAEKPKKKAPAKKKASEKAADSE</sequence>
<keyword id="KW-0131">Cell cycle</keyword>
<keyword id="KW-0132">Cell division</keyword>
<keyword id="KW-0143">Chaperone</keyword>
<keyword id="KW-0963">Cytoplasm</keyword>
<keyword id="KW-0413">Isomerase</keyword>
<keyword id="KW-0697">Rotamase</keyword>